<dbReference type="EC" id="3.6.1.66" evidence="1"/>
<dbReference type="EMBL" id="BX571661">
    <property type="protein sequence ID" value="CAE10813.1"/>
    <property type="molecule type" value="Genomic_DNA"/>
</dbReference>
<dbReference type="RefSeq" id="WP_011139596.1">
    <property type="nucleotide sequence ID" value="NC_005090.1"/>
</dbReference>
<dbReference type="SMR" id="Q7MR19"/>
<dbReference type="STRING" id="273121.WS1795"/>
<dbReference type="KEGG" id="wsu:WS1795"/>
<dbReference type="eggNOG" id="COG0127">
    <property type="taxonomic scope" value="Bacteria"/>
</dbReference>
<dbReference type="HOGENOM" id="CLU_082080_0_2_7"/>
<dbReference type="Proteomes" id="UP000000422">
    <property type="component" value="Chromosome"/>
</dbReference>
<dbReference type="GO" id="GO:0005829">
    <property type="term" value="C:cytosol"/>
    <property type="evidence" value="ECO:0007669"/>
    <property type="project" value="TreeGrafter"/>
</dbReference>
<dbReference type="GO" id="GO:0035870">
    <property type="term" value="F:dITP diphosphatase activity"/>
    <property type="evidence" value="ECO:0007669"/>
    <property type="project" value="RHEA"/>
</dbReference>
<dbReference type="GO" id="GO:0036220">
    <property type="term" value="F:ITP diphosphatase activity"/>
    <property type="evidence" value="ECO:0007669"/>
    <property type="project" value="UniProtKB-EC"/>
</dbReference>
<dbReference type="GO" id="GO:0046872">
    <property type="term" value="F:metal ion binding"/>
    <property type="evidence" value="ECO:0007669"/>
    <property type="project" value="UniProtKB-KW"/>
</dbReference>
<dbReference type="GO" id="GO:0000166">
    <property type="term" value="F:nucleotide binding"/>
    <property type="evidence" value="ECO:0007669"/>
    <property type="project" value="UniProtKB-KW"/>
</dbReference>
<dbReference type="GO" id="GO:0017111">
    <property type="term" value="F:ribonucleoside triphosphate phosphatase activity"/>
    <property type="evidence" value="ECO:0007669"/>
    <property type="project" value="InterPro"/>
</dbReference>
<dbReference type="GO" id="GO:0036222">
    <property type="term" value="F:XTP diphosphatase activity"/>
    <property type="evidence" value="ECO:0007669"/>
    <property type="project" value="RHEA"/>
</dbReference>
<dbReference type="GO" id="GO:0009117">
    <property type="term" value="P:nucleotide metabolic process"/>
    <property type="evidence" value="ECO:0007669"/>
    <property type="project" value="UniProtKB-KW"/>
</dbReference>
<dbReference type="GO" id="GO:0009146">
    <property type="term" value="P:purine nucleoside triphosphate catabolic process"/>
    <property type="evidence" value="ECO:0007669"/>
    <property type="project" value="UniProtKB-UniRule"/>
</dbReference>
<dbReference type="CDD" id="cd00515">
    <property type="entry name" value="HAM1"/>
    <property type="match status" value="1"/>
</dbReference>
<dbReference type="FunFam" id="3.90.950.10:FF:000001">
    <property type="entry name" value="dITP/XTP pyrophosphatase"/>
    <property type="match status" value="1"/>
</dbReference>
<dbReference type="Gene3D" id="3.90.950.10">
    <property type="match status" value="1"/>
</dbReference>
<dbReference type="HAMAP" id="MF_01405">
    <property type="entry name" value="Non_canon_purine_NTPase"/>
    <property type="match status" value="1"/>
</dbReference>
<dbReference type="InterPro" id="IPR020922">
    <property type="entry name" value="dITP/XTP_pyrophosphatase"/>
</dbReference>
<dbReference type="InterPro" id="IPR029001">
    <property type="entry name" value="ITPase-like_fam"/>
</dbReference>
<dbReference type="InterPro" id="IPR002637">
    <property type="entry name" value="RdgB/HAM1"/>
</dbReference>
<dbReference type="NCBIfam" id="TIGR00042">
    <property type="entry name" value="RdgB/HAM1 family non-canonical purine NTP pyrophosphatase"/>
    <property type="match status" value="1"/>
</dbReference>
<dbReference type="PANTHER" id="PTHR11067:SF9">
    <property type="entry name" value="INOSINE TRIPHOSPHATE PYROPHOSPHATASE"/>
    <property type="match status" value="1"/>
</dbReference>
<dbReference type="PANTHER" id="PTHR11067">
    <property type="entry name" value="INOSINE TRIPHOSPHATE PYROPHOSPHATASE/HAM1 PROTEIN"/>
    <property type="match status" value="1"/>
</dbReference>
<dbReference type="Pfam" id="PF01725">
    <property type="entry name" value="Ham1p_like"/>
    <property type="match status" value="1"/>
</dbReference>
<dbReference type="SUPFAM" id="SSF52972">
    <property type="entry name" value="ITPase-like"/>
    <property type="match status" value="1"/>
</dbReference>
<protein>
    <recommendedName>
        <fullName evidence="1">dITP/XTP pyrophosphatase</fullName>
        <ecNumber evidence="1">3.6.1.66</ecNumber>
    </recommendedName>
    <alternativeName>
        <fullName evidence="1">Non-canonical purine NTP pyrophosphatase</fullName>
    </alternativeName>
    <alternativeName>
        <fullName evidence="1">Non-standard purine NTP pyrophosphatase</fullName>
    </alternativeName>
    <alternativeName>
        <fullName evidence="1">Nucleoside-triphosphate diphosphatase</fullName>
    </alternativeName>
    <alternativeName>
        <fullName evidence="1">Nucleoside-triphosphate pyrophosphatase</fullName>
        <shortName evidence="1">NTPase</shortName>
    </alternativeName>
</protein>
<proteinExistence type="inferred from homology"/>
<reference key="1">
    <citation type="journal article" date="2003" name="Proc. Natl. Acad. Sci. U.S.A.">
        <title>Complete genome sequence and analysis of Wolinella succinogenes.</title>
        <authorList>
            <person name="Baar C."/>
            <person name="Eppinger M."/>
            <person name="Raddatz G."/>
            <person name="Simon J."/>
            <person name="Lanz C."/>
            <person name="Klimmek O."/>
            <person name="Nandakumar R."/>
            <person name="Gross R."/>
            <person name="Rosinus A."/>
            <person name="Keller H."/>
            <person name="Jagtap P."/>
            <person name="Linke B."/>
            <person name="Meyer F."/>
            <person name="Lederer H."/>
            <person name="Schuster S.C."/>
        </authorList>
    </citation>
    <scope>NUCLEOTIDE SEQUENCE [LARGE SCALE GENOMIC DNA]</scope>
    <source>
        <strain>ATCC 29543 / DSM 1740 / CCUG 13145 / JCM 31913 / LMG 7466 / NCTC 11488 / FDC 602W</strain>
    </source>
</reference>
<name>IXTPA_WOLSU</name>
<evidence type="ECO:0000255" key="1">
    <source>
        <dbReference type="HAMAP-Rule" id="MF_01405"/>
    </source>
</evidence>
<comment type="function">
    <text evidence="1">Pyrophosphatase that catalyzes the hydrolysis of nucleoside triphosphates to their monophosphate derivatives, with a high preference for the non-canonical purine nucleotides XTP (xanthosine triphosphate), dITP (deoxyinosine triphosphate) and ITP. Seems to function as a house-cleaning enzyme that removes non-canonical purine nucleotides from the nucleotide pool, thus preventing their incorporation into DNA/RNA and avoiding chromosomal lesions.</text>
</comment>
<comment type="catalytic activity">
    <reaction evidence="1">
        <text>XTP + H2O = XMP + diphosphate + H(+)</text>
        <dbReference type="Rhea" id="RHEA:28610"/>
        <dbReference type="ChEBI" id="CHEBI:15377"/>
        <dbReference type="ChEBI" id="CHEBI:15378"/>
        <dbReference type="ChEBI" id="CHEBI:33019"/>
        <dbReference type="ChEBI" id="CHEBI:57464"/>
        <dbReference type="ChEBI" id="CHEBI:61314"/>
        <dbReference type="EC" id="3.6.1.66"/>
    </reaction>
</comment>
<comment type="catalytic activity">
    <reaction evidence="1">
        <text>dITP + H2O = dIMP + diphosphate + H(+)</text>
        <dbReference type="Rhea" id="RHEA:28342"/>
        <dbReference type="ChEBI" id="CHEBI:15377"/>
        <dbReference type="ChEBI" id="CHEBI:15378"/>
        <dbReference type="ChEBI" id="CHEBI:33019"/>
        <dbReference type="ChEBI" id="CHEBI:61194"/>
        <dbReference type="ChEBI" id="CHEBI:61382"/>
        <dbReference type="EC" id="3.6.1.66"/>
    </reaction>
</comment>
<comment type="catalytic activity">
    <reaction evidence="1">
        <text>ITP + H2O = IMP + diphosphate + H(+)</text>
        <dbReference type="Rhea" id="RHEA:29399"/>
        <dbReference type="ChEBI" id="CHEBI:15377"/>
        <dbReference type="ChEBI" id="CHEBI:15378"/>
        <dbReference type="ChEBI" id="CHEBI:33019"/>
        <dbReference type="ChEBI" id="CHEBI:58053"/>
        <dbReference type="ChEBI" id="CHEBI:61402"/>
        <dbReference type="EC" id="3.6.1.66"/>
    </reaction>
</comment>
<comment type="cofactor">
    <cofactor evidence="1">
        <name>Mg(2+)</name>
        <dbReference type="ChEBI" id="CHEBI:18420"/>
    </cofactor>
    <text evidence="1">Binds 1 Mg(2+) ion per subunit.</text>
</comment>
<comment type="subunit">
    <text evidence="1">Homodimer.</text>
</comment>
<comment type="similarity">
    <text evidence="1">Belongs to the HAM1 NTPase family.</text>
</comment>
<keyword id="KW-0378">Hydrolase</keyword>
<keyword id="KW-0460">Magnesium</keyword>
<keyword id="KW-0479">Metal-binding</keyword>
<keyword id="KW-0546">Nucleotide metabolism</keyword>
<keyword id="KW-0547">Nucleotide-binding</keyword>
<keyword id="KW-1185">Reference proteome</keyword>
<gene>
    <name type="ordered locus">WS1795</name>
</gene>
<organism>
    <name type="scientific">Wolinella succinogenes (strain ATCC 29543 / DSM 1740 / CCUG 13145 / JCM 31913 / LMG 7466 / NCTC 11488 / FDC 602W)</name>
    <name type="common">Vibrio succinogenes</name>
    <dbReference type="NCBI Taxonomy" id="273121"/>
    <lineage>
        <taxon>Bacteria</taxon>
        <taxon>Pseudomonadati</taxon>
        <taxon>Campylobacterota</taxon>
        <taxon>Epsilonproteobacteria</taxon>
        <taxon>Campylobacterales</taxon>
        <taxon>Helicobacteraceae</taxon>
        <taxon>Wolinella</taxon>
    </lineage>
</organism>
<sequence>MKILIATGNRDKLQEIAQIFSDHEVMGYHEIMEPFEIIEDGESFQANAIIKAKAIHERLSAQDRARYLILSDDSGISVPLLHGEPGIYSARYAGEPLSSKRNLQKLIEEIQKRGAERTPAHYTAAMAMILEGRIYTVHGWMHGEAIIAPRGERGFGYDPMFIPQGENRTLGEMEESEKNAISHRAKALKLARKLLQSLTKTEG</sequence>
<feature type="chain" id="PRO_0000178265" description="dITP/XTP pyrophosphatase">
    <location>
        <begin position="1"/>
        <end position="203"/>
    </location>
</feature>
<feature type="active site" description="Proton acceptor" evidence="1">
    <location>
        <position position="73"/>
    </location>
</feature>
<feature type="binding site" evidence="1">
    <location>
        <begin position="7"/>
        <end position="12"/>
    </location>
    <ligand>
        <name>substrate</name>
    </ligand>
</feature>
<feature type="binding site" evidence="1">
    <location>
        <position position="73"/>
    </location>
    <ligand>
        <name>Mg(2+)</name>
        <dbReference type="ChEBI" id="CHEBI:18420"/>
    </ligand>
</feature>
<feature type="binding site" evidence="1">
    <location>
        <position position="74"/>
    </location>
    <ligand>
        <name>substrate</name>
    </ligand>
</feature>
<feature type="binding site" evidence="1">
    <location>
        <begin position="155"/>
        <end position="158"/>
    </location>
    <ligand>
        <name>substrate</name>
    </ligand>
</feature>
<feature type="binding site" evidence="1">
    <location>
        <position position="178"/>
    </location>
    <ligand>
        <name>substrate</name>
    </ligand>
</feature>
<feature type="binding site" evidence="1">
    <location>
        <begin position="183"/>
        <end position="184"/>
    </location>
    <ligand>
        <name>substrate</name>
    </ligand>
</feature>
<accession>Q7MR19</accession>